<proteinExistence type="inferred from homology"/>
<protein>
    <recommendedName>
        <fullName evidence="1">Bifunctional purine biosynthesis protein PurH</fullName>
    </recommendedName>
    <domain>
        <recommendedName>
            <fullName evidence="1">Phosphoribosylaminoimidazolecarboxamide formyltransferase</fullName>
            <ecNumber evidence="1">2.1.2.3</ecNumber>
        </recommendedName>
        <alternativeName>
            <fullName evidence="1">AICAR transformylase</fullName>
        </alternativeName>
    </domain>
    <domain>
        <recommendedName>
            <fullName evidence="1">IMP cyclohydrolase</fullName>
            <ecNumber evidence="1">3.5.4.10</ecNumber>
        </recommendedName>
        <alternativeName>
            <fullName evidence="1">ATIC</fullName>
        </alternativeName>
        <alternativeName>
            <fullName evidence="1">IMP synthase</fullName>
        </alternativeName>
        <alternativeName>
            <fullName evidence="1">Inosinicase</fullName>
        </alternativeName>
    </domain>
</protein>
<gene>
    <name evidence="1" type="primary">purH</name>
    <name type="ordered locus">BMA10229_A1131</name>
</gene>
<reference key="1">
    <citation type="journal article" date="2010" name="Genome Biol. Evol.">
        <title>Continuing evolution of Burkholderia mallei through genome reduction and large-scale rearrangements.</title>
        <authorList>
            <person name="Losada L."/>
            <person name="Ronning C.M."/>
            <person name="DeShazer D."/>
            <person name="Woods D."/>
            <person name="Fedorova N."/>
            <person name="Kim H.S."/>
            <person name="Shabalina S.A."/>
            <person name="Pearson T.R."/>
            <person name="Brinkac L."/>
            <person name="Tan P."/>
            <person name="Nandi T."/>
            <person name="Crabtree J."/>
            <person name="Badger J."/>
            <person name="Beckstrom-Sternberg S."/>
            <person name="Saqib M."/>
            <person name="Schutzer S.E."/>
            <person name="Keim P."/>
            <person name="Nierman W.C."/>
        </authorList>
    </citation>
    <scope>NUCLEOTIDE SEQUENCE [LARGE SCALE GENOMIC DNA]</scope>
    <source>
        <strain>NCTC 10229</strain>
    </source>
</reference>
<comment type="catalytic activity">
    <reaction evidence="1">
        <text>(6R)-10-formyltetrahydrofolate + 5-amino-1-(5-phospho-beta-D-ribosyl)imidazole-4-carboxamide = 5-formamido-1-(5-phospho-D-ribosyl)imidazole-4-carboxamide + (6S)-5,6,7,8-tetrahydrofolate</text>
        <dbReference type="Rhea" id="RHEA:22192"/>
        <dbReference type="ChEBI" id="CHEBI:57453"/>
        <dbReference type="ChEBI" id="CHEBI:58467"/>
        <dbReference type="ChEBI" id="CHEBI:58475"/>
        <dbReference type="ChEBI" id="CHEBI:195366"/>
        <dbReference type="EC" id="2.1.2.3"/>
    </reaction>
</comment>
<comment type="catalytic activity">
    <reaction evidence="1">
        <text>IMP + H2O = 5-formamido-1-(5-phospho-D-ribosyl)imidazole-4-carboxamide</text>
        <dbReference type="Rhea" id="RHEA:18445"/>
        <dbReference type="ChEBI" id="CHEBI:15377"/>
        <dbReference type="ChEBI" id="CHEBI:58053"/>
        <dbReference type="ChEBI" id="CHEBI:58467"/>
        <dbReference type="EC" id="3.5.4.10"/>
    </reaction>
</comment>
<comment type="pathway">
    <text evidence="1">Purine metabolism; IMP biosynthesis via de novo pathway; 5-formamido-1-(5-phospho-D-ribosyl)imidazole-4-carboxamide from 5-amino-1-(5-phospho-D-ribosyl)imidazole-4-carboxamide (10-formyl THF route): step 1/1.</text>
</comment>
<comment type="pathway">
    <text evidence="1">Purine metabolism; IMP biosynthesis via de novo pathway; IMP from 5-formamido-1-(5-phospho-D-ribosyl)imidazole-4-carboxamide: step 1/1.</text>
</comment>
<comment type="domain">
    <text evidence="1">The IMP cyclohydrolase activity resides in the N-terminal region.</text>
</comment>
<comment type="similarity">
    <text evidence="1">Belongs to the PurH family.</text>
</comment>
<dbReference type="EC" id="2.1.2.3" evidence="1"/>
<dbReference type="EC" id="3.5.4.10" evidence="1"/>
<dbReference type="EMBL" id="CP000546">
    <property type="protein sequence ID" value="ABN03293.1"/>
    <property type="molecule type" value="Genomic_DNA"/>
</dbReference>
<dbReference type="RefSeq" id="WP_004194285.1">
    <property type="nucleotide sequence ID" value="NC_008836.1"/>
</dbReference>
<dbReference type="SMR" id="A2S597"/>
<dbReference type="GeneID" id="92980050"/>
<dbReference type="KEGG" id="bml:BMA10229_A1131"/>
<dbReference type="HOGENOM" id="CLU_016316_5_2_4"/>
<dbReference type="UniPathway" id="UPA00074">
    <property type="reaction ID" value="UER00133"/>
</dbReference>
<dbReference type="UniPathway" id="UPA00074">
    <property type="reaction ID" value="UER00135"/>
</dbReference>
<dbReference type="Proteomes" id="UP000002283">
    <property type="component" value="Chromosome I"/>
</dbReference>
<dbReference type="GO" id="GO:0005829">
    <property type="term" value="C:cytosol"/>
    <property type="evidence" value="ECO:0007669"/>
    <property type="project" value="TreeGrafter"/>
</dbReference>
<dbReference type="GO" id="GO:0003937">
    <property type="term" value="F:IMP cyclohydrolase activity"/>
    <property type="evidence" value="ECO:0007669"/>
    <property type="project" value="UniProtKB-UniRule"/>
</dbReference>
<dbReference type="GO" id="GO:0004643">
    <property type="term" value="F:phosphoribosylaminoimidazolecarboxamide formyltransferase activity"/>
    <property type="evidence" value="ECO:0007669"/>
    <property type="project" value="UniProtKB-UniRule"/>
</dbReference>
<dbReference type="GO" id="GO:0006189">
    <property type="term" value="P:'de novo' IMP biosynthetic process"/>
    <property type="evidence" value="ECO:0007669"/>
    <property type="project" value="UniProtKB-UniRule"/>
</dbReference>
<dbReference type="CDD" id="cd01421">
    <property type="entry name" value="IMPCH"/>
    <property type="match status" value="1"/>
</dbReference>
<dbReference type="FunFam" id="3.40.140.20:FF:000001">
    <property type="entry name" value="Bifunctional purine biosynthesis protein PurH"/>
    <property type="match status" value="1"/>
</dbReference>
<dbReference type="FunFam" id="3.40.140.20:FF:000002">
    <property type="entry name" value="Bifunctional purine biosynthesis protein PurH"/>
    <property type="match status" value="1"/>
</dbReference>
<dbReference type="FunFam" id="3.40.50.1380:FF:000001">
    <property type="entry name" value="Bifunctional purine biosynthesis protein PurH"/>
    <property type="match status" value="1"/>
</dbReference>
<dbReference type="Gene3D" id="3.40.140.20">
    <property type="match status" value="2"/>
</dbReference>
<dbReference type="Gene3D" id="3.40.50.1380">
    <property type="entry name" value="Methylglyoxal synthase-like domain"/>
    <property type="match status" value="1"/>
</dbReference>
<dbReference type="HAMAP" id="MF_00139">
    <property type="entry name" value="PurH"/>
    <property type="match status" value="1"/>
</dbReference>
<dbReference type="InterPro" id="IPR024051">
    <property type="entry name" value="AICAR_Tfase_dup_dom_sf"/>
</dbReference>
<dbReference type="InterPro" id="IPR016193">
    <property type="entry name" value="Cytidine_deaminase-like"/>
</dbReference>
<dbReference type="InterPro" id="IPR011607">
    <property type="entry name" value="MGS-like_dom"/>
</dbReference>
<dbReference type="InterPro" id="IPR036914">
    <property type="entry name" value="MGS-like_dom_sf"/>
</dbReference>
<dbReference type="InterPro" id="IPR002695">
    <property type="entry name" value="PurH-like"/>
</dbReference>
<dbReference type="NCBIfam" id="NF002049">
    <property type="entry name" value="PRK00881.1"/>
    <property type="match status" value="1"/>
</dbReference>
<dbReference type="NCBIfam" id="TIGR00355">
    <property type="entry name" value="purH"/>
    <property type="match status" value="1"/>
</dbReference>
<dbReference type="PANTHER" id="PTHR11692:SF0">
    <property type="entry name" value="BIFUNCTIONAL PURINE BIOSYNTHESIS PROTEIN ATIC"/>
    <property type="match status" value="1"/>
</dbReference>
<dbReference type="PANTHER" id="PTHR11692">
    <property type="entry name" value="BIFUNCTIONAL PURINE BIOSYNTHESIS PROTEIN PURH"/>
    <property type="match status" value="1"/>
</dbReference>
<dbReference type="Pfam" id="PF01808">
    <property type="entry name" value="AICARFT_IMPCHas"/>
    <property type="match status" value="1"/>
</dbReference>
<dbReference type="Pfam" id="PF02142">
    <property type="entry name" value="MGS"/>
    <property type="match status" value="1"/>
</dbReference>
<dbReference type="PIRSF" id="PIRSF000414">
    <property type="entry name" value="AICARFT_IMPCHas"/>
    <property type="match status" value="1"/>
</dbReference>
<dbReference type="SMART" id="SM00798">
    <property type="entry name" value="AICARFT_IMPCHas"/>
    <property type="match status" value="1"/>
</dbReference>
<dbReference type="SMART" id="SM00851">
    <property type="entry name" value="MGS"/>
    <property type="match status" value="1"/>
</dbReference>
<dbReference type="SUPFAM" id="SSF53927">
    <property type="entry name" value="Cytidine deaminase-like"/>
    <property type="match status" value="1"/>
</dbReference>
<dbReference type="SUPFAM" id="SSF52335">
    <property type="entry name" value="Methylglyoxal synthase-like"/>
    <property type="match status" value="1"/>
</dbReference>
<dbReference type="PROSITE" id="PS51855">
    <property type="entry name" value="MGS"/>
    <property type="match status" value="1"/>
</dbReference>
<evidence type="ECO:0000255" key="1">
    <source>
        <dbReference type="HAMAP-Rule" id="MF_00139"/>
    </source>
</evidence>
<evidence type="ECO:0000255" key="2">
    <source>
        <dbReference type="PROSITE-ProRule" id="PRU01202"/>
    </source>
</evidence>
<name>PUR9_BURM9</name>
<feature type="chain" id="PRO_1000018855" description="Bifunctional purine biosynthesis protein PurH">
    <location>
        <begin position="1"/>
        <end position="521"/>
    </location>
</feature>
<feature type="domain" description="MGS-like" evidence="2">
    <location>
        <begin position="1"/>
        <end position="145"/>
    </location>
</feature>
<keyword id="KW-0378">Hydrolase</keyword>
<keyword id="KW-0511">Multifunctional enzyme</keyword>
<keyword id="KW-0658">Purine biosynthesis</keyword>
<keyword id="KW-0808">Transferase</keyword>
<organism>
    <name type="scientific">Burkholderia mallei (strain NCTC 10229)</name>
    <dbReference type="NCBI Taxonomy" id="412022"/>
    <lineage>
        <taxon>Bacteria</taxon>
        <taxon>Pseudomonadati</taxon>
        <taxon>Pseudomonadota</taxon>
        <taxon>Betaproteobacteria</taxon>
        <taxon>Burkholderiales</taxon>
        <taxon>Burkholderiaceae</taxon>
        <taxon>Burkholderia</taxon>
        <taxon>pseudomallei group</taxon>
    </lineage>
</organism>
<accession>A2S597</accession>
<sequence length="521" mass="55458">MIKQALISVSDKTGIVDFAKALSALGVKLLSTGGTAKLLADAGLPVTEVADYTGFPEMLDGRVKTLHPKVHGGILARRDLPEHMQALEAHGIPTIDLLVVNLYPFVQTIAKDDCTLADAIENIDIGGPTMLRSAAKNHRDVTVVVDPADYAVVLDEMKANGNTLGYKTNFRLATKVFAHTAQYDGAITNYLTSLGDDLQHGSRSAYPATLNLAFDKVQDLRYGENPHQSAAFYRDVATPAGALANYRQLQGKELSYNNIADSDAAWECVKTFDAPACVIIKHANPCGVAVGADAGEAYAKAFQTDPTSAFGGIIAFNREVDEAAAQAVAKQFVEVLIAPSFSDAAKQVFAAKQNVRLLEIALGEGHNAFDLKRVGGGLLVQSLDSKNVQPRELRVVTKRHPTPKEMDDLLFAWRVAKYVKSNAIVFCGNGMTLGVGAGQMSRVDSARIASIKAQNAGLTLAGSAVASDAFFPFRDGLDVVVAAGATCVIQPGGSVRDDEVIAAADEHNIAMVVTGVRHFRH</sequence>